<name>APAG_ACIF5</name>
<sequence length="127" mass="14069">MEDQPPTEIQISVETRYLPEQSSPEQEHFAFAYQITMQNNGPQTAQLLSRHWIITDAEGHVQEVKGPGVVGEQPTLQPGQRFRYTSGSVLSTPVGSMHGTFEWVSDTGESFVVPIPAFRLAAATVFH</sequence>
<proteinExistence type="inferred from homology"/>
<protein>
    <recommendedName>
        <fullName evidence="1">Protein ApaG</fullName>
    </recommendedName>
</protein>
<feature type="chain" id="PRO_1000133779" description="Protein ApaG">
    <location>
        <begin position="1"/>
        <end position="127"/>
    </location>
</feature>
<feature type="domain" description="ApaG" evidence="1">
    <location>
        <begin position="3"/>
        <end position="127"/>
    </location>
</feature>
<organism>
    <name type="scientific">Acidithiobacillus ferrooxidans (strain ATCC 53993 / BNL-5-31)</name>
    <name type="common">Leptospirillum ferrooxidans (ATCC 53993)</name>
    <dbReference type="NCBI Taxonomy" id="380394"/>
    <lineage>
        <taxon>Bacteria</taxon>
        <taxon>Pseudomonadati</taxon>
        <taxon>Pseudomonadota</taxon>
        <taxon>Acidithiobacillia</taxon>
        <taxon>Acidithiobacillales</taxon>
        <taxon>Acidithiobacillaceae</taxon>
        <taxon>Acidithiobacillus</taxon>
    </lineage>
</organism>
<accession>B5ENR7</accession>
<reference key="1">
    <citation type="submission" date="2008-08" db="EMBL/GenBank/DDBJ databases">
        <title>Complete sequence of Acidithiobacillus ferrooxidans ATCC 53993.</title>
        <authorList>
            <person name="Lucas S."/>
            <person name="Copeland A."/>
            <person name="Lapidus A."/>
            <person name="Glavina del Rio T."/>
            <person name="Dalin E."/>
            <person name="Tice H."/>
            <person name="Bruce D."/>
            <person name="Goodwin L."/>
            <person name="Pitluck S."/>
            <person name="Sims D."/>
            <person name="Brettin T."/>
            <person name="Detter J.C."/>
            <person name="Han C."/>
            <person name="Kuske C.R."/>
            <person name="Larimer F."/>
            <person name="Land M."/>
            <person name="Hauser L."/>
            <person name="Kyrpides N."/>
            <person name="Lykidis A."/>
            <person name="Borole A.P."/>
        </authorList>
    </citation>
    <scope>NUCLEOTIDE SEQUENCE [LARGE SCALE GENOMIC DNA]</scope>
    <source>
        <strain>ATCC 53993 / BNL-5-31</strain>
    </source>
</reference>
<evidence type="ECO:0000255" key="1">
    <source>
        <dbReference type="HAMAP-Rule" id="MF_00791"/>
    </source>
</evidence>
<gene>
    <name evidence="1" type="primary">apaG</name>
    <name type="ordered locus">Lferr_2359</name>
</gene>
<dbReference type="EMBL" id="CP001132">
    <property type="protein sequence ID" value="ACH84560.1"/>
    <property type="molecule type" value="Genomic_DNA"/>
</dbReference>
<dbReference type="RefSeq" id="WP_009561099.1">
    <property type="nucleotide sequence ID" value="NC_011206.1"/>
</dbReference>
<dbReference type="SMR" id="B5ENR7"/>
<dbReference type="GeneID" id="65281777"/>
<dbReference type="KEGG" id="afe:Lferr_2359"/>
<dbReference type="eggNOG" id="COG2967">
    <property type="taxonomic scope" value="Bacteria"/>
</dbReference>
<dbReference type="HOGENOM" id="CLU_128074_0_0_6"/>
<dbReference type="GO" id="GO:0070987">
    <property type="term" value="P:error-free translesion synthesis"/>
    <property type="evidence" value="ECO:0007669"/>
    <property type="project" value="TreeGrafter"/>
</dbReference>
<dbReference type="Gene3D" id="2.60.40.1470">
    <property type="entry name" value="ApaG domain"/>
    <property type="match status" value="1"/>
</dbReference>
<dbReference type="HAMAP" id="MF_00791">
    <property type="entry name" value="ApaG"/>
    <property type="match status" value="1"/>
</dbReference>
<dbReference type="InterPro" id="IPR007474">
    <property type="entry name" value="ApaG_domain"/>
</dbReference>
<dbReference type="InterPro" id="IPR036767">
    <property type="entry name" value="ApaG_sf"/>
</dbReference>
<dbReference type="InterPro" id="IPR023065">
    <property type="entry name" value="Uncharacterised_ApaG"/>
</dbReference>
<dbReference type="NCBIfam" id="NF003967">
    <property type="entry name" value="PRK05461.1"/>
    <property type="match status" value="1"/>
</dbReference>
<dbReference type="PANTHER" id="PTHR14289">
    <property type="entry name" value="F-BOX ONLY PROTEIN 3"/>
    <property type="match status" value="1"/>
</dbReference>
<dbReference type="PANTHER" id="PTHR14289:SF16">
    <property type="entry name" value="POLYMERASE DELTA-INTERACTING PROTEIN 2"/>
    <property type="match status" value="1"/>
</dbReference>
<dbReference type="Pfam" id="PF04379">
    <property type="entry name" value="DUF525"/>
    <property type="match status" value="1"/>
</dbReference>
<dbReference type="SUPFAM" id="SSF110069">
    <property type="entry name" value="ApaG-like"/>
    <property type="match status" value="1"/>
</dbReference>
<dbReference type="PROSITE" id="PS51087">
    <property type="entry name" value="APAG"/>
    <property type="match status" value="1"/>
</dbReference>